<reference key="1">
    <citation type="journal article" date="1990" name="J. Biol. Chem.">
        <title>The sequence of the cyo operon indicates substantial structural similarities between the cytochrome o ubiquinol oxidase of Escherichia coli and the aa3-type family of cytochrome c oxidases.</title>
        <authorList>
            <person name="Chepuri V."/>
            <person name="Lemieux L."/>
            <person name="Au D.C.T."/>
            <person name="Gennis R.B."/>
        </authorList>
    </citation>
    <scope>NUCLEOTIDE SEQUENCE [GENOMIC DNA]</scope>
</reference>
<reference key="2">
    <citation type="submission" date="1997-01" db="EMBL/GenBank/DDBJ databases">
        <title>Sequence of minutes 4-25 of Escherichia coli.</title>
        <authorList>
            <person name="Chung E."/>
            <person name="Allen E."/>
            <person name="Araujo R."/>
            <person name="Aparicio A.M."/>
            <person name="Davis K."/>
            <person name="Duncan M."/>
            <person name="Federspiel N."/>
            <person name="Hyman R."/>
            <person name="Kalman S."/>
            <person name="Komp C."/>
            <person name="Kurdi O."/>
            <person name="Lew H."/>
            <person name="Lin D."/>
            <person name="Namath A."/>
            <person name="Oefner P."/>
            <person name="Roberts D."/>
            <person name="Schramm S."/>
            <person name="Davis R.W."/>
        </authorList>
    </citation>
    <scope>NUCLEOTIDE SEQUENCE [LARGE SCALE GENOMIC DNA]</scope>
    <source>
        <strain>K12 / MG1655 / ATCC 47076</strain>
    </source>
</reference>
<reference key="3">
    <citation type="journal article" date="1997" name="Science">
        <title>The complete genome sequence of Escherichia coli K-12.</title>
        <authorList>
            <person name="Blattner F.R."/>
            <person name="Plunkett G. III"/>
            <person name="Bloch C.A."/>
            <person name="Perna N.T."/>
            <person name="Burland V."/>
            <person name="Riley M."/>
            <person name="Collado-Vides J."/>
            <person name="Glasner J.D."/>
            <person name="Rode C.K."/>
            <person name="Mayhew G.F."/>
            <person name="Gregor J."/>
            <person name="Davis N.W."/>
            <person name="Kirkpatrick H.A."/>
            <person name="Goeden M.A."/>
            <person name="Rose D.J."/>
            <person name="Mau B."/>
            <person name="Shao Y."/>
        </authorList>
    </citation>
    <scope>NUCLEOTIDE SEQUENCE [LARGE SCALE GENOMIC DNA]</scope>
    <source>
        <strain>K12 / MG1655 / ATCC 47076</strain>
    </source>
</reference>
<reference key="4">
    <citation type="journal article" date="2006" name="Mol. Syst. Biol.">
        <title>Highly accurate genome sequences of Escherichia coli K-12 strains MG1655 and W3110.</title>
        <authorList>
            <person name="Hayashi K."/>
            <person name="Morooka N."/>
            <person name="Yamamoto Y."/>
            <person name="Fujita K."/>
            <person name="Isono K."/>
            <person name="Choi S."/>
            <person name="Ohtsubo E."/>
            <person name="Baba T."/>
            <person name="Wanner B.L."/>
            <person name="Mori H."/>
            <person name="Horiuchi T."/>
        </authorList>
    </citation>
    <scope>NUCLEOTIDE SEQUENCE [LARGE SCALE GENOMIC DNA]</scope>
    <source>
        <strain>K12 / W3110 / ATCC 27325 / DSM 5911</strain>
    </source>
</reference>
<reference key="5">
    <citation type="journal article" date="1983" name="Proc. Natl. Acad. Sci. U.S.A.">
        <title>Reconstitution of active transport in proteoliposomes containing cytochrome o oxidase and lac carrier protein purified from Escherichia coli.</title>
        <authorList>
            <person name="Matsushita K."/>
            <person name="Patel L."/>
            <person name="Gennis R.B."/>
            <person name="Kaback H.R."/>
        </authorList>
    </citation>
    <scope>FUNCTION IN UBIQUINOL OXIDATION</scope>
    <scope>FUNCTION IN PROTON ELECTROCHEMICAL GRADIENT GENERATION</scope>
    <scope>COFACTOR</scope>
    <scope>SUBUNIT</scope>
</reference>
<reference key="6">
    <citation type="journal article" date="1984" name="J. Biol. Chem.">
        <title>Terminal oxidases of Escherichia coli aerobic respiratory chain. I. Purification and properties of cytochrome b562-o complex from cells in the early exponential phase of aerobic growth.</title>
        <authorList>
            <person name="Kita K."/>
            <person name="Konishi K."/>
            <person name="Anraku Y."/>
        </authorList>
    </citation>
    <scope>CATALYTIC ACTIVITY</scope>
    <scope>COFACTOR</scope>
    <scope>ACTIVITY REGULATION</scope>
    <scope>BIOPHYSICOCHEMICAL PROPERTIES</scope>
    <scope>SUBCELLULAR LOCATION</scope>
    <source>
        <strain>K12 / KL251/ORF4</strain>
    </source>
</reference>
<reference key="7">
    <citation type="journal article" date="1990" name="J. Biol. Chem.">
        <title>The use of gene fusions to determine the topology of all of the subunits of the cytochrome o terminal oxidase complex of Escherichia coli.</title>
        <authorList>
            <person name="Chepuri V."/>
            <person name="Gennis R.B."/>
        </authorList>
    </citation>
    <scope>TOPOLOGY</scope>
</reference>
<reference key="8">
    <citation type="journal article" date="1990" name="Biochim. Biophys. Acta">
        <title>Recent studies of the cytochrome o terminal oxidase complex of Escherichia coli.</title>
        <authorList>
            <person name="Chepuri V."/>
            <person name="Lemieux L."/>
            <person name="Hill J."/>
            <person name="Alben J.O."/>
            <person name="Gennis R.B."/>
        </authorList>
    </citation>
    <scope>TOPOLOGY</scope>
</reference>
<reference key="9">
    <citation type="journal article" date="1992" name="J. Biol. Chem.">
        <title>Identification of heme and copper ligands in subunit I of the cytochrome bo complex in Escherichia coli.</title>
        <authorList>
            <person name="Minagawa J."/>
            <person name="Mogi T."/>
            <person name="Gennis R.B."/>
            <person name="Anraku Y."/>
        </authorList>
    </citation>
    <scope>COPPER-BINDING</scope>
    <scope>HEME-BINDING</scope>
    <scope>COFACTOR</scope>
    <scope>MUTAGENESIS OF HIS-54; HIS-106; HIS-284; HIS-333; HIS-334; HIS-411; HIS-419 AND HIS-421</scope>
</reference>
<reference key="10">
    <citation type="journal article" date="1997" name="J. Biochem.">
        <title>Substitutions of charged amino acid residues conserved in subunit I perturb the redox metal centers of the Escherichia coli bo-type ubiquinol oxidase.</title>
        <authorList>
            <person name="Kawasaki M."/>
            <person name="Mogi T."/>
            <person name="Anraku Y."/>
        </authorList>
    </citation>
    <scope>MUTAGENESIS OF LYS-55; ARG-80; ASP-135; TYR-173; ASP-188; 256-ASP-ARG-257; GLU-286; TYR-288; LYS-362; ASP-407; 481-ARG-ARG-482 AND GLU-540</scope>
</reference>
<reference key="11">
    <citation type="journal article" date="2002" name="Biochemistry">
        <title>Identification of the residues involved in stabilization of the semiquinone radical in the high-affinity ubiquinone binding site in cytochrome bo(3) from Escherichia coli by site-directed mutagenesis and EPR spectroscopy.</title>
        <authorList>
            <person name="Hellwig P."/>
            <person name="Yano T."/>
            <person name="Ohnishi T."/>
            <person name="Gennis R.B."/>
        </authorList>
    </citation>
    <scope>PROBABLE HIGH AFFINITY-QUINONE BINDING (QH)</scope>
    <scope>COFACTOR</scope>
    <scope>MUTAGENESIS OF ARG-71; ASP-75; HIS-98 AND ILE-102</scope>
</reference>
<reference key="12">
    <citation type="journal article" date="2005" name="Science">
        <title>Global topology analysis of the Escherichia coli inner membrane proteome.</title>
        <authorList>
            <person name="Daley D.O."/>
            <person name="Rapp M."/>
            <person name="Granseth E."/>
            <person name="Melen K."/>
            <person name="Drew D."/>
            <person name="von Heijne G."/>
        </authorList>
    </citation>
    <scope>TOPOLOGY [LARGE SCALE ANALYSIS]</scope>
    <source>
        <strain>K12 / MG1655 / ATCC 47076</strain>
    </source>
</reference>
<reference key="13">
    <citation type="journal article" date="2007" name="J. Biol. Chem.">
        <title>Characterization of mutants that change the hydrogen bonding of the semiquinone radical at the QH site of the cytochrome bo3 from Escherichia coli.</title>
        <authorList>
            <person name="Yap L.L."/>
            <person name="Samoilova R.I."/>
            <person name="Gennis R.B."/>
            <person name="Dikanov S.A."/>
        </authorList>
    </citation>
    <scope>MUTAGENESIS OF ASP-75</scope>
</reference>
<reference key="14">
    <citation type="journal article" date="2009" name="J. Bacteriol.">
        <title>Respiration of Escherichia coli can be fully uncoupled via the nonelectrogenic terminal cytochrome bd-II oxidase.</title>
        <authorList>
            <person name="Bekker M."/>
            <person name="de Vries S."/>
            <person name="Ter Beek A."/>
            <person name="Hellingwerf K.J."/>
            <person name="de Mattos M.J."/>
        </authorList>
    </citation>
    <scope>FUNCTION AS AN OXIDASE</scope>
    <scope>FUNCTION AS A PROTON PUMP</scope>
    <scope>DISRUPTION PHENOTYPE</scope>
    <source>
        <strain>K12</strain>
    </source>
</reference>
<reference key="15">
    <citation type="journal article" date="2012" name="Appl. Environ. Microbiol.">
        <title>Uncoupling of substrate-level phosphorylation in Escherichia coli during glucose-limited growth.</title>
        <authorList>
            <person name="Sharma P."/>
            <person name="Hellingwerf K.J."/>
            <person name="de Mattos M.J."/>
            <person name="Bekker M."/>
        </authorList>
    </citation>
    <scope>FUNCTION AS AN OXIDASE</scope>
    <scope>FUNCTION IN PROTON TRANSLOCATION</scope>
    <scope>DISRUPTION PHENOTYPE</scope>
    <source>
        <strain>K12</strain>
    </source>
</reference>
<reference evidence="14" key="16">
    <citation type="journal article" date="2000" name="Nat. Struct. Biol.">
        <title>The structure of the ubiquinol oxidase from Escherichia coli and its ubiquinone binding site.</title>
        <authorList>
            <person name="Abramson J."/>
            <person name="Riistama S."/>
            <person name="Larsson G."/>
            <person name="Jasaitis A."/>
            <person name="Svensson-Ek M."/>
            <person name="Puustinen A."/>
            <person name="Iwata S."/>
            <person name="Wikstrom M."/>
        </authorList>
    </citation>
    <scope>X-RAY CRYSTALLOGRAPHY (3.5 ANGSTROMS) IN COMPLEX WITH HEME O; HEME B; CU(2+) AND OTHER UBIQUINOL OXIDASE SUBUNITS</scope>
    <scope>FUNCTION</scope>
    <scope>CATALYTIC ACTIVITY</scope>
    <scope>BIOPHYSICOCHEMICAL PROPERTIES</scope>
    <scope>PROBABLE PROTON CHANNELS</scope>
    <scope>COFACTOR</scope>
    <scope>SUBUNIT</scope>
    <scope>MUTAGENESIS OF ARG-71; ASP-75; HIS-98 AND GLN-101</scope>
</reference>
<reference evidence="15" key="17">
    <citation type="journal article" date="2021" name="Nat. Methods">
        <title>A 'Build and Retrieve' methodology to simultaneously solve cryo-EM structures of membrane proteins.</title>
        <authorList>
            <person name="Su C.C."/>
            <person name="Lyu M."/>
            <person name="Morgan C.E."/>
            <person name="Bolla J.R."/>
            <person name="Robinson C.V."/>
            <person name="Yu E.W."/>
        </authorList>
    </citation>
    <scope>STRUCTURE BY ELECTRON MICROSCOPY (2.38 ANGSTROMS) IN COMPLEX WITH HEME O; HEME B; CU(2+); UBIQUINONE-8 AND OTHER UBIQUINOL OXIDASE SUBUNITS</scope>
    <scope>COFACTOR</scope>
</reference>
<reference evidence="16 17 18 19" key="18">
    <citation type="journal article" date="2021" name="Proc. Natl. Acad. Sci. U.S.A.">
        <title>Cryo-EM structures of Escherichia coli cytochrome bo3 reveal bound phospholipids and ubiquinone-8 in a dynamic substrate binding site.</title>
        <authorList>
            <person name="Li J."/>
            <person name="Han L."/>
            <person name="Vallese F."/>
            <person name="Ding Z."/>
            <person name="Choi S.K."/>
            <person name="Hong S."/>
            <person name="Luo Y."/>
            <person name="Liu B."/>
            <person name="Chan C.K."/>
            <person name="Tajkhorshid E."/>
            <person name="Zhu J."/>
            <person name="Clarke O."/>
            <person name="Zhang K."/>
            <person name="Gennis R."/>
        </authorList>
    </citation>
    <scope>STRUCTURE BY ELECTRON MICROSCOPY (2.19 ANGSTROMS) IN COMPLEXES WITH HEME O; HEME B; CU(2+); UBIQUINONE-8; PHOSPHOLIPIDS AND OTHER UBIQUINOL OXIDASE SUBUNITS</scope>
    <scope>COFACTOR</scope>
</reference>
<comment type="function">
    <text evidence="1 5 6 9">Cytochrome bo(3) ubiquinol oxidase is the terminal enzyme in the aerobic respiratory chain of E.coli that predominates when cells are grown at high aeration. Catalyzes the four-electron reduction of O2 to water, using a ubiquinol as a membrane soluble electron donor for molecular oxygen reduction; ubiquinol-8 is the natural substrate for E.coli. Has proton pump activity across the membrane in addition to electron transfer, pumping 2 protons/electron and generating a proton motive force. All the redox centers of this enzyme complex are located within the largest subunit, subunit I. Protons are probably pumped via D- and K- channels found in this subunit (PubMed:11017202).</text>
</comment>
<comment type="catalytic activity">
    <reaction evidence="1 10">
        <text>2 a ubiquinol + O2 + n H(+)(in) = 2 a ubiquinone + 2 H2O + n H(+)(out)</text>
        <dbReference type="Rhea" id="RHEA:30251"/>
        <dbReference type="Rhea" id="RHEA-COMP:9565"/>
        <dbReference type="Rhea" id="RHEA-COMP:9566"/>
        <dbReference type="ChEBI" id="CHEBI:15377"/>
        <dbReference type="ChEBI" id="CHEBI:15378"/>
        <dbReference type="ChEBI" id="CHEBI:15379"/>
        <dbReference type="ChEBI" id="CHEBI:16389"/>
        <dbReference type="ChEBI" id="CHEBI:17976"/>
        <dbReference type="EC" id="7.1.1.3"/>
    </reaction>
</comment>
<comment type="cofactor">
    <cofactor evidence="1 7">
        <name>Cu(2+)</name>
        <dbReference type="ChEBI" id="CHEBI:29036"/>
    </cofactor>
    <text evidence="1 7">Binds 1 copper B ion per subunit.</text>
</comment>
<comment type="cofactor">
    <cofactor evidence="1 7">
        <name>heme b</name>
        <dbReference type="ChEBI" id="CHEBI:60344"/>
    </cofactor>
    <text evidence="1 7">Binds 1 low-spin heme b per subunit.</text>
</comment>
<comment type="cofactor">
    <cofactor evidence="1 7">
        <name>Fe(II)-heme o</name>
        <dbReference type="ChEBI" id="CHEBI:60530"/>
    </cofactor>
    <text evidence="1 7">Binds 1 high-spin heme o per subunit, also named heme o(3).</text>
</comment>
<comment type="activity regulation">
    <text evidence="10">Competitively inhibited by piericidin A, non-competitively inhibited by 2-n-heptyl-4-hydroxyquinoline N-oxide, NaN(3) and KCN; 50% inhibition occurs at 2 uM, 2 uM, 15 mM and 10 uM, respectively. Inhibited by Zn(2+) and Cd(2+).</text>
</comment>
<comment type="biophysicochemical properties">
    <kinetics>
        <KM evidence="1">18 uM for ubiquinol-1</KM>
        <KM evidence="10">50 uM for ubiquinol-1</KM>
        <KM evidence="10">50 uM for ubiquinol-6</KM>
        <Vmax evidence="10">15.5 umol/min/nmol enzyme with ubiquinol-1</Vmax>
        <Vmax evidence="10">12.6 umol/min/nmol enzyme with ubiquinol-6</Vmax>
    </kinetics>
    <phDependence>
        <text evidence="10">Optimum pH is 7.4.</text>
    </phDependence>
</comment>
<comment type="subunit">
    <text evidence="1 9">The cytochrome bo(3) ubiquinol oxidase complex is a heterooctamer of two A chains, two B chains, two C chains and two D chains.</text>
</comment>
<comment type="interaction">
    <interactant intactId="EBI-2932021">
        <id>P0ABI8</id>
    </interactant>
    <interactant intactId="EBI-543661">
        <id>P77806</id>
        <label>ybdL</label>
    </interactant>
    <organismsDiffer>false</organismsDiffer>
    <experiments>3</experiments>
</comment>
<comment type="subcellular location">
    <subcellularLocation>
        <location evidence="10">Cell inner membrane</location>
        <topology evidence="10">Multi-pass membrane protein</topology>
    </subcellularLocation>
</comment>
<comment type="disruption phenotype">
    <text evidence="5 6">Increased reduction of the ubiquinone pool (in aerobically grown minimal medium with glucose).</text>
</comment>
<comment type="miscellaneous">
    <text>Ubiquinol oxidase catalyzes the terminal step in the electron transport chain.</text>
</comment>
<comment type="similarity">
    <text evidence="12">Belongs to the heme-copper respiratory oxidase family.</text>
</comment>
<accession>P0ABI8</accession>
<accession>P18401</accession>
<accession>Q2MBZ5</accession>
<dbReference type="EC" id="7.1.1.3" evidence="10"/>
<dbReference type="EMBL" id="J05492">
    <property type="protein sequence ID" value="AAA23632.1"/>
    <property type="molecule type" value="Genomic_DNA"/>
</dbReference>
<dbReference type="EMBL" id="U82664">
    <property type="protein sequence ID" value="AAB40187.1"/>
    <property type="molecule type" value="Genomic_DNA"/>
</dbReference>
<dbReference type="EMBL" id="U00096">
    <property type="protein sequence ID" value="AAC73534.1"/>
    <property type="molecule type" value="Genomic_DNA"/>
</dbReference>
<dbReference type="EMBL" id="AP009048">
    <property type="protein sequence ID" value="BAE76211.1"/>
    <property type="molecule type" value="Genomic_DNA"/>
</dbReference>
<dbReference type="PIR" id="B42226">
    <property type="entry name" value="B42226"/>
</dbReference>
<dbReference type="RefSeq" id="NP_414965.1">
    <property type="nucleotide sequence ID" value="NC_000913.3"/>
</dbReference>
<dbReference type="RefSeq" id="WP_000467180.1">
    <property type="nucleotide sequence ID" value="NZ_STEB01000007.1"/>
</dbReference>
<dbReference type="PDB" id="1FFT">
    <property type="method" value="X-ray"/>
    <property type="resolution" value="3.50 A"/>
    <property type="chains" value="A/F=1-663"/>
</dbReference>
<dbReference type="PDB" id="6WTI">
    <property type="method" value="EM"/>
    <property type="resolution" value="2.38 A"/>
    <property type="chains" value="A=1-663"/>
</dbReference>
<dbReference type="PDB" id="7CUB">
    <property type="method" value="EM"/>
    <property type="resolution" value="2.55 A"/>
    <property type="chains" value="A=1-663"/>
</dbReference>
<dbReference type="PDB" id="7CUQ">
    <property type="method" value="EM"/>
    <property type="resolution" value="2.64 A"/>
    <property type="chains" value="A=1-663"/>
</dbReference>
<dbReference type="PDB" id="7CUW">
    <property type="method" value="EM"/>
    <property type="resolution" value="2.63 A"/>
    <property type="chains" value="A=1-663"/>
</dbReference>
<dbReference type="PDB" id="7N9Z">
    <property type="method" value="EM"/>
    <property type="resolution" value="2.19 A"/>
    <property type="chains" value="F=1-663"/>
</dbReference>
<dbReference type="PDB" id="7XMC">
    <property type="method" value="EM"/>
    <property type="resolution" value="3.09 A"/>
    <property type="chains" value="A=1-663"/>
</dbReference>
<dbReference type="PDB" id="7XMD">
    <property type="method" value="EM"/>
    <property type="resolution" value="2.99 A"/>
    <property type="chains" value="A=1-663"/>
</dbReference>
<dbReference type="PDB" id="8F68">
    <property type="method" value="EM"/>
    <property type="resolution" value="3.15 A"/>
    <property type="chains" value="A=1-658"/>
</dbReference>
<dbReference type="PDB" id="8F6C">
    <property type="method" value="EM"/>
    <property type="resolution" value="3.46 A"/>
    <property type="chains" value="A/E=1-658"/>
</dbReference>
<dbReference type="PDB" id="8GO3">
    <property type="method" value="EM"/>
    <property type="resolution" value="3.09 A"/>
    <property type="chains" value="A=1-663"/>
</dbReference>
<dbReference type="PDB" id="8QQK">
    <property type="method" value="EM"/>
    <property type="resolution" value="2.80 A"/>
    <property type="chains" value="A=1-663"/>
</dbReference>
<dbReference type="PDBsum" id="1FFT"/>
<dbReference type="PDBsum" id="6WTI"/>
<dbReference type="PDBsum" id="7CUB"/>
<dbReference type="PDBsum" id="7CUQ"/>
<dbReference type="PDBsum" id="7CUW"/>
<dbReference type="PDBsum" id="7N9Z"/>
<dbReference type="PDBsum" id="7XMC"/>
<dbReference type="PDBsum" id="7XMD"/>
<dbReference type="PDBsum" id="8F68"/>
<dbReference type="PDBsum" id="8F6C"/>
<dbReference type="PDBsum" id="8GO3"/>
<dbReference type="PDBsum" id="8QQK"/>
<dbReference type="EMDB" id="EMD-18594"/>
<dbReference type="EMDB" id="EMD-28877"/>
<dbReference type="EMDB" id="EMD-28879"/>
<dbReference type="EMDB" id="EMD-30471"/>
<dbReference type="EMDB" id="EMD-30474"/>
<dbReference type="EMDB" id="EMD-30475"/>
<dbReference type="EMDB" id="EMD-33293"/>
<dbReference type="EMDB" id="EMD-33294"/>
<dbReference type="SMR" id="P0ABI8"/>
<dbReference type="BioGRID" id="4259710">
    <property type="interactions" value="271"/>
</dbReference>
<dbReference type="BioGRID" id="849987">
    <property type="interactions" value="1"/>
</dbReference>
<dbReference type="ComplexPortal" id="CPX-2102">
    <property type="entry name" value="Cytochrome bo3 ubiquinol oxidase complex"/>
</dbReference>
<dbReference type="DIP" id="DIP-47943N"/>
<dbReference type="FunCoup" id="P0ABI8">
    <property type="interactions" value="361"/>
</dbReference>
<dbReference type="IntAct" id="P0ABI8">
    <property type="interactions" value="3"/>
</dbReference>
<dbReference type="STRING" id="511145.b0431"/>
<dbReference type="TCDB" id="3.D.4.5.1">
    <property type="family name" value="the proton-translocating cytochrome oxidase (cox) superfamily"/>
</dbReference>
<dbReference type="jPOST" id="P0ABI8"/>
<dbReference type="PaxDb" id="511145-b0431"/>
<dbReference type="EnsemblBacteria" id="AAC73534">
    <property type="protein sequence ID" value="AAC73534"/>
    <property type="gene ID" value="b0431"/>
</dbReference>
<dbReference type="GeneID" id="93777023"/>
<dbReference type="GeneID" id="945615"/>
<dbReference type="KEGG" id="ecj:JW0421"/>
<dbReference type="KEGG" id="eco:b0431"/>
<dbReference type="KEGG" id="ecoc:C3026_02105"/>
<dbReference type="PATRIC" id="fig|1411691.4.peg.1846"/>
<dbReference type="EchoBASE" id="EB0176"/>
<dbReference type="eggNOG" id="COG0843">
    <property type="taxonomic scope" value="Bacteria"/>
</dbReference>
<dbReference type="HOGENOM" id="CLU_011899_7_1_6"/>
<dbReference type="InParanoid" id="P0ABI8"/>
<dbReference type="OMA" id="WAMMSIG"/>
<dbReference type="OrthoDB" id="9803294at2"/>
<dbReference type="PhylomeDB" id="P0ABI8"/>
<dbReference type="BioCyc" id="EcoCyc:CYOB-MONOMER"/>
<dbReference type="BioCyc" id="MetaCyc:CYOB-MONOMER"/>
<dbReference type="BRENDA" id="7.1.1.3">
    <property type="organism ID" value="2026"/>
</dbReference>
<dbReference type="EvolutionaryTrace" id="P0ABI8"/>
<dbReference type="PRO" id="PR:P0ABI8"/>
<dbReference type="Proteomes" id="UP000000625">
    <property type="component" value="Chromosome"/>
</dbReference>
<dbReference type="GO" id="GO:0009319">
    <property type="term" value="C:cytochrome o ubiquinol oxidase complex"/>
    <property type="evidence" value="ECO:0000314"/>
    <property type="project" value="EcoCyc"/>
</dbReference>
<dbReference type="GO" id="GO:0005886">
    <property type="term" value="C:plasma membrane"/>
    <property type="evidence" value="ECO:0000314"/>
    <property type="project" value="ComplexPortal"/>
</dbReference>
<dbReference type="GO" id="GO:0005507">
    <property type="term" value="F:copper ion binding"/>
    <property type="evidence" value="ECO:0000314"/>
    <property type="project" value="EcoCyc"/>
</dbReference>
<dbReference type="GO" id="GO:0009486">
    <property type="term" value="F:cytochrome bo3 ubiquinol oxidase activity"/>
    <property type="evidence" value="ECO:0000314"/>
    <property type="project" value="EcoCyc"/>
</dbReference>
<dbReference type="GO" id="GO:0004129">
    <property type="term" value="F:cytochrome-c oxidase activity"/>
    <property type="evidence" value="ECO:0007669"/>
    <property type="project" value="InterPro"/>
</dbReference>
<dbReference type="GO" id="GO:0009055">
    <property type="term" value="F:electron transfer activity"/>
    <property type="evidence" value="ECO:0000314"/>
    <property type="project" value="EcoCyc"/>
</dbReference>
<dbReference type="GO" id="GO:0020037">
    <property type="term" value="F:heme binding"/>
    <property type="evidence" value="ECO:0000314"/>
    <property type="project" value="EcoCyc"/>
</dbReference>
<dbReference type="GO" id="GO:0016682">
    <property type="term" value="F:oxidoreductase activity, acting on diphenols and related substances as donors, oxygen as acceptor"/>
    <property type="evidence" value="ECO:0007669"/>
    <property type="project" value="InterPro"/>
</dbReference>
<dbReference type="GO" id="GO:0015453">
    <property type="term" value="F:oxidoreduction-driven active transmembrane transporter activity"/>
    <property type="evidence" value="ECO:0000314"/>
    <property type="project" value="EcoCyc"/>
</dbReference>
<dbReference type="GO" id="GO:0015078">
    <property type="term" value="F:proton transmembrane transporter activity"/>
    <property type="evidence" value="ECO:0000314"/>
    <property type="project" value="EcoCyc"/>
</dbReference>
<dbReference type="GO" id="GO:0048039">
    <property type="term" value="F:ubiquinone binding"/>
    <property type="evidence" value="ECO:0000314"/>
    <property type="project" value="EcoCyc"/>
</dbReference>
<dbReference type="GO" id="GO:0019646">
    <property type="term" value="P:aerobic electron transport chain"/>
    <property type="evidence" value="ECO:0000314"/>
    <property type="project" value="ComplexPortal"/>
</dbReference>
<dbReference type="GO" id="GO:0009060">
    <property type="term" value="P:aerobic respiration"/>
    <property type="evidence" value="ECO:0000315"/>
    <property type="project" value="EcoCyc"/>
</dbReference>
<dbReference type="GO" id="GO:0015990">
    <property type="term" value="P:electron transport coupled proton transport"/>
    <property type="evidence" value="ECO:0000314"/>
    <property type="project" value="ComplexPortal"/>
</dbReference>
<dbReference type="GO" id="GO:0022904">
    <property type="term" value="P:respiratory electron transport chain"/>
    <property type="evidence" value="ECO:0000318"/>
    <property type="project" value="GO_Central"/>
</dbReference>
<dbReference type="CDD" id="cd01662">
    <property type="entry name" value="Ubiquinol_Oxidase_I"/>
    <property type="match status" value="1"/>
</dbReference>
<dbReference type="DisProt" id="DP00088"/>
<dbReference type="FunFam" id="1.20.210.10:FF:000002">
    <property type="entry name" value="Cytochrome o ubiquinol oxidase, subunit I"/>
    <property type="match status" value="1"/>
</dbReference>
<dbReference type="Gene3D" id="1.20.210.10">
    <property type="entry name" value="Cytochrome c oxidase-like, subunit I domain"/>
    <property type="match status" value="1"/>
</dbReference>
<dbReference type="InterPro" id="IPR023616">
    <property type="entry name" value="Cyt_c_oxase-like_su1_dom"/>
</dbReference>
<dbReference type="InterPro" id="IPR036927">
    <property type="entry name" value="Cyt_c_oxase-like_su1_sf"/>
</dbReference>
<dbReference type="InterPro" id="IPR000883">
    <property type="entry name" value="Cyt_C_Oxase_1"/>
</dbReference>
<dbReference type="InterPro" id="IPR023615">
    <property type="entry name" value="Cyt_c_Oxase_su1_BS"/>
</dbReference>
<dbReference type="InterPro" id="IPR014207">
    <property type="entry name" value="Cyt_c_ubiqinol_oxidase_su1"/>
</dbReference>
<dbReference type="NCBIfam" id="TIGR02843">
    <property type="entry name" value="CyoB"/>
    <property type="match status" value="1"/>
</dbReference>
<dbReference type="NCBIfam" id="NF011592">
    <property type="entry name" value="PRK15017.1"/>
    <property type="match status" value="1"/>
</dbReference>
<dbReference type="PANTHER" id="PTHR10422:SF35">
    <property type="entry name" value="CYTOCHROME BO(3) UBIQUINOL OXIDASE SUBUNIT 1"/>
    <property type="match status" value="1"/>
</dbReference>
<dbReference type="PANTHER" id="PTHR10422">
    <property type="entry name" value="CYTOCHROME C OXIDASE SUBUNIT 1"/>
    <property type="match status" value="1"/>
</dbReference>
<dbReference type="Pfam" id="PF00115">
    <property type="entry name" value="COX1"/>
    <property type="match status" value="1"/>
</dbReference>
<dbReference type="PRINTS" id="PR01165">
    <property type="entry name" value="CYCOXIDASEI"/>
</dbReference>
<dbReference type="SUPFAM" id="SSF81442">
    <property type="entry name" value="Cytochrome c oxidase subunit I-like"/>
    <property type="match status" value="1"/>
</dbReference>
<dbReference type="PROSITE" id="PS50855">
    <property type="entry name" value="COX1"/>
    <property type="match status" value="1"/>
</dbReference>
<dbReference type="PROSITE" id="PS00077">
    <property type="entry name" value="COX1_CUB"/>
    <property type="match status" value="1"/>
</dbReference>
<organism>
    <name type="scientific">Escherichia coli (strain K12)</name>
    <dbReference type="NCBI Taxonomy" id="83333"/>
    <lineage>
        <taxon>Bacteria</taxon>
        <taxon>Pseudomonadati</taxon>
        <taxon>Pseudomonadota</taxon>
        <taxon>Gammaproteobacteria</taxon>
        <taxon>Enterobacterales</taxon>
        <taxon>Enterobacteriaceae</taxon>
        <taxon>Escherichia</taxon>
    </lineage>
</organism>
<keyword id="KW-0002">3D-structure</keyword>
<keyword id="KW-0997">Cell inner membrane</keyword>
<keyword id="KW-1003">Cell membrane</keyword>
<keyword id="KW-0186">Copper</keyword>
<keyword id="KW-0249">Electron transport</keyword>
<keyword id="KW-0349">Heme</keyword>
<keyword id="KW-0375">Hydrogen ion transport</keyword>
<keyword id="KW-0406">Ion transport</keyword>
<keyword id="KW-0408">Iron</keyword>
<keyword id="KW-0472">Membrane</keyword>
<keyword id="KW-0479">Metal-binding</keyword>
<keyword id="KW-1185">Reference proteome</keyword>
<keyword id="KW-0679">Respiratory chain</keyword>
<keyword id="KW-1278">Translocase</keyword>
<keyword id="KW-0812">Transmembrane</keyword>
<keyword id="KW-1133">Transmembrane helix</keyword>
<keyword id="KW-0813">Transport</keyword>
<gene>
    <name type="primary">cyoB</name>
    <name type="ordered locus">b0431</name>
    <name type="ordered locus">JW0421</name>
</gene>
<evidence type="ECO:0000269" key="1">
    <source>
    </source>
</evidence>
<evidence type="ECO:0000269" key="2">
    <source>
    </source>
</evidence>
<evidence type="ECO:0000269" key="3">
    <source>
    </source>
</evidence>
<evidence type="ECO:0000269" key="4">
    <source>
    </source>
</evidence>
<evidence type="ECO:0000269" key="5">
    <source>
    </source>
</evidence>
<evidence type="ECO:0000269" key="6">
    <source>
    </source>
</evidence>
<evidence type="ECO:0000269" key="7">
    <source>
    </source>
</evidence>
<evidence type="ECO:0000269" key="8">
    <source>
    </source>
</evidence>
<evidence type="ECO:0000269" key="9">
    <source>
    </source>
</evidence>
<evidence type="ECO:0000269" key="10">
    <source>
    </source>
</evidence>
<evidence type="ECO:0000269" key="11">
    <source>
    </source>
</evidence>
<evidence type="ECO:0000305" key="12"/>
<evidence type="ECO:0000305" key="13">
    <source>
    </source>
</evidence>
<evidence type="ECO:0007744" key="14">
    <source>
        <dbReference type="PDB" id="1FFT"/>
    </source>
</evidence>
<evidence type="ECO:0007744" key="15">
    <source>
        <dbReference type="PDB" id="6WTI"/>
    </source>
</evidence>
<evidence type="ECO:0007744" key="16">
    <source>
        <dbReference type="PDB" id="7CUB"/>
    </source>
</evidence>
<evidence type="ECO:0007744" key="17">
    <source>
        <dbReference type="PDB" id="7CUQ"/>
    </source>
</evidence>
<evidence type="ECO:0007744" key="18">
    <source>
        <dbReference type="PDB" id="7CUW"/>
    </source>
</evidence>
<evidence type="ECO:0007744" key="19">
    <source>
        <dbReference type="PDB" id="7N9Z"/>
    </source>
</evidence>
<evidence type="ECO:0007829" key="20">
    <source>
        <dbReference type="PDB" id="6WTI"/>
    </source>
</evidence>
<evidence type="ECO:0007829" key="21">
    <source>
        <dbReference type="PDB" id="7CUB"/>
    </source>
</evidence>
<evidence type="ECO:0007829" key="22">
    <source>
        <dbReference type="PDB" id="7CUW"/>
    </source>
</evidence>
<evidence type="ECO:0007829" key="23">
    <source>
        <dbReference type="PDB" id="7N9Z"/>
    </source>
</evidence>
<evidence type="ECO:0007829" key="24">
    <source>
        <dbReference type="PDB" id="7XMD"/>
    </source>
</evidence>
<name>CYOB_ECOLI</name>
<sequence>MFGKLSLDAVPFHEPIVMVTIAGIILGGLALVGLITYFGKWTYLWKEWLTSVDHKRLGIMYIIVAIVMLLRGFADAIMMRSQQALASAGEAGFLPPHHYDQIFTAHGVIMIFFVAMPFVIGLMNLVVPLQIGARDVAFPFLNNLSFWFTVVGVILVNVSLGVGEFAQTGWLAYPPLSGIEYSPGVGVDYWIWSLQLSGIGTTLTGINFFVTILKMRAPGMTMFKMPVFTWASLCANVLIIASFPILTVTVALLTLDRYLGTHFFTNDMGGNMMMYINLIWAWGHPEVYILILPVFGVFSEIAATFSRKRLFGYTSLVWATVCITVLSFIVWLHHFFTMGAGANVNAFFGITTMIIAIPTGVKIFNWLFTMYQGRIVFHSAMLWTIGFIVTFSVGGMTGVLLAVPGADFVLHNSLFLIAHFHNVIIGGVVFGCFAGMTYWWPKAFGFKLNETWGKRAFWFWIIGFFVAFMPLYALGFMGMTRRLSQQIDPQFHTMLMIAASGAVLIALGILCLVIQMYVSIRDRDQNRDLTGDPWGGRTLEWATSSPPPFYNFAVVPHVHERDAFWEMKEKGEAYKKPDHYEEIHMPKNSGAGIVIAAFSTIFGFAMIWHIWWLAIVGFAGMIITWIVKSFDEDVDYYVPVAEIEKLENQHFDEITKAGLKNGN</sequence>
<protein>
    <recommendedName>
        <fullName>Cytochrome bo(3) ubiquinol oxidase subunit 1</fullName>
        <shortName evidence="13">cyt bo(3) subunit 1</shortName>
        <ecNumber evidence="10">7.1.1.3</ecNumber>
    </recommendedName>
    <alternativeName>
        <fullName>Cytochrome b562-o complex subunit I</fullName>
    </alternativeName>
    <alternativeName>
        <fullName>Cytochrome o ubiquinol oxidase subunit 1</fullName>
        <shortName>Cytochrome o subunit 1</shortName>
    </alternativeName>
    <alternativeName>
        <fullName>Oxidase bo(3) subunit 1</fullName>
    </alternativeName>
    <alternativeName>
        <fullName>Ubiquinol oxidase chain A</fullName>
    </alternativeName>
    <alternativeName>
        <fullName>Ubiquinol oxidase polypeptide I</fullName>
    </alternativeName>
    <alternativeName>
        <fullName>Ubiquinol oxidase subunit 1</fullName>
    </alternativeName>
</protein>
<feature type="chain" id="PRO_0000183476" description="Cytochrome bo(3) ubiquinol oxidase subunit 1">
    <location>
        <begin position="1"/>
        <end position="663"/>
    </location>
</feature>
<feature type="topological domain" description="Periplasmic">
    <location>
        <begin position="1"/>
        <end position="16"/>
    </location>
</feature>
<feature type="transmembrane region" description="Helical; Name=I">
    <location>
        <begin position="17"/>
        <end position="35"/>
    </location>
</feature>
<feature type="topological domain" description="Cytoplasmic">
    <location>
        <begin position="36"/>
        <end position="52"/>
    </location>
</feature>
<feature type="transmembrane region" description="Helical; Name=II">
    <location>
        <begin position="53"/>
        <end position="80"/>
    </location>
</feature>
<feature type="topological domain" description="Periplasmic">
    <location>
        <begin position="81"/>
        <end position="95"/>
    </location>
</feature>
<feature type="transmembrane region" description="Helical; Name=III">
    <location>
        <begin position="96"/>
        <end position="132"/>
    </location>
</feature>
<feature type="topological domain" description="Cytoplasmic">
    <location>
        <begin position="133"/>
        <end position="137"/>
    </location>
</feature>
<feature type="transmembrane region" description="Helical; Name=IV">
    <location>
        <begin position="138"/>
        <end position="161"/>
    </location>
</feature>
<feature type="topological domain" description="Periplasmic">
    <location>
        <begin position="162"/>
        <end position="184"/>
    </location>
</feature>
<feature type="transmembrane region" description="Helical; Name=V">
    <location>
        <begin position="185"/>
        <end position="215"/>
    </location>
</feature>
<feature type="topological domain" description="Cytoplasmic">
    <location>
        <begin position="216"/>
        <end position="224"/>
    </location>
</feature>
<feature type="transmembrane region" description="Helical; Name=VI">
    <location>
        <begin position="225"/>
        <end position="260"/>
    </location>
</feature>
<feature type="topological domain" description="Periplasmic">
    <location>
        <begin position="261"/>
        <end position="270"/>
    </location>
</feature>
<feature type="transmembrane region" description="Helical; Name=VII">
    <location>
        <begin position="271"/>
        <end position="307"/>
    </location>
</feature>
<feature type="topological domain" description="Cytoplasmic">
    <location>
        <begin position="308"/>
        <end position="311"/>
    </location>
</feature>
<feature type="transmembrane region" description="Helical; Name=VIII">
    <location>
        <begin position="312"/>
        <end position="326"/>
    </location>
</feature>
<feature type="topological domain" description="Periplasmic">
    <location>
        <begin position="327"/>
        <end position="340"/>
    </location>
</feature>
<feature type="transmembrane region" description="Helical; Name=IX">
    <location>
        <begin position="341"/>
        <end position="369"/>
    </location>
</feature>
<feature type="topological domain" description="Cytoplasmic">
    <location>
        <begin position="370"/>
        <end position="377"/>
    </location>
</feature>
<feature type="transmembrane region" description="Helical; Name=X">
    <location>
        <begin position="378"/>
        <end position="409"/>
    </location>
</feature>
<feature type="topological domain" description="Periplasmic">
    <location>
        <begin position="410"/>
        <end position="412"/>
    </location>
</feature>
<feature type="transmembrane region" description="Helical; Name=XI">
    <location>
        <begin position="413"/>
        <end position="445"/>
    </location>
</feature>
<feature type="topological domain" description="Cytoplasmic">
    <location>
        <begin position="446"/>
        <end position="448"/>
    </location>
</feature>
<feature type="transmembrane region" description="Helical; Name=XII">
    <location>
        <begin position="449"/>
        <end position="477"/>
    </location>
</feature>
<feature type="topological domain" description="Periplasmic">
    <location>
        <begin position="478"/>
        <end position="489"/>
    </location>
</feature>
<feature type="transmembrane region" description="Helical; Name=XIII">
    <location>
        <begin position="490"/>
        <end position="521"/>
    </location>
</feature>
<feature type="topological domain" description="Cytoplasmic">
    <location>
        <begin position="522"/>
        <end position="587"/>
    </location>
</feature>
<feature type="transmembrane region" description="Helical; Name=XIV">
    <location>
        <begin position="588"/>
        <end position="606"/>
    </location>
</feature>
<feature type="topological domain" description="Periplasmic">
    <location>
        <begin position="607"/>
        <end position="613"/>
    </location>
</feature>
<feature type="transmembrane region" description="Helical; Name=XV">
    <location>
        <begin position="614"/>
        <end position="632"/>
    </location>
</feature>
<feature type="topological domain" description="Cytoplasmic">
    <location>
        <begin position="633"/>
        <end position="663"/>
    </location>
</feature>
<feature type="binding site" evidence="7 8 15 16 18 19">
    <location>
        <position position="71"/>
    </location>
    <ligand>
        <name>ubiquinone-8</name>
        <dbReference type="ChEBI" id="CHEBI:61683"/>
    </ligand>
</feature>
<feature type="binding site" evidence="8 18">
    <location>
        <position position="75"/>
    </location>
    <ligand>
        <name>ubiquinone-8</name>
        <dbReference type="ChEBI" id="CHEBI:61683"/>
    </ligand>
</feature>
<feature type="binding site" evidence="8 16 18 19">
    <location>
        <position position="98"/>
    </location>
    <ligand>
        <name>ubiquinone-8</name>
        <dbReference type="ChEBI" id="CHEBI:61683"/>
    </ligand>
</feature>
<feature type="binding site" description="axial binding residue" evidence="1 7 14 15">
    <location>
        <position position="106"/>
    </location>
    <ligand>
        <name>heme b</name>
        <dbReference type="ChEBI" id="CHEBI:60344"/>
    </ligand>
    <ligandPart>
        <name>Fe</name>
        <dbReference type="ChEBI" id="CHEBI:18248"/>
    </ligandPart>
</feature>
<feature type="binding site" evidence="1 14">
    <location>
        <position position="170"/>
    </location>
    <ligand>
        <name>heme b</name>
        <dbReference type="ChEBI" id="CHEBI:60344"/>
    </ligand>
</feature>
<feature type="binding site" evidence="1 7 14 15">
    <location>
        <position position="284"/>
    </location>
    <ligand>
        <name>Cu(2+)</name>
        <dbReference type="ChEBI" id="CHEBI:29036"/>
    </ligand>
</feature>
<feature type="binding site" evidence="7 15">
    <location>
        <position position="288"/>
    </location>
    <ligand>
        <name>Fe(II)-heme o</name>
        <dbReference type="ChEBI" id="CHEBI:60530"/>
    </ligand>
</feature>
<feature type="binding site" evidence="1 7 14 15">
    <location>
        <position position="333"/>
    </location>
    <ligand>
        <name>Cu(2+)</name>
        <dbReference type="ChEBI" id="CHEBI:29036"/>
    </ligand>
</feature>
<feature type="binding site" evidence="1 7 14 15">
    <location>
        <position position="334"/>
    </location>
    <ligand>
        <name>Cu(2+)</name>
        <dbReference type="ChEBI" id="CHEBI:29036"/>
    </ligand>
</feature>
<feature type="binding site" evidence="1 7 14 15">
    <location>
        <position position="411"/>
    </location>
    <ligand>
        <name>Fe(II)-heme o</name>
        <dbReference type="ChEBI" id="CHEBI:60530"/>
    </ligand>
</feature>
<feature type="binding site" description="axial binding residue" evidence="1 7 14 15">
    <location>
        <position position="419"/>
    </location>
    <ligand>
        <name>Fe(II)-heme o</name>
        <dbReference type="ChEBI" id="CHEBI:60530"/>
    </ligand>
    <ligandPart>
        <name>Fe</name>
        <dbReference type="ChEBI" id="CHEBI:18248"/>
    </ligandPart>
</feature>
<feature type="binding site" description="axial binding residue" evidence="1 7 14 15">
    <location>
        <position position="421"/>
    </location>
    <ligand>
        <name>heme b</name>
        <dbReference type="ChEBI" id="CHEBI:60344"/>
    </ligand>
    <ligandPart>
        <name>Fe</name>
        <dbReference type="ChEBI" id="CHEBI:18248"/>
    </ligandPart>
</feature>
<feature type="binding site" evidence="7 15">
    <location>
        <position position="481"/>
    </location>
    <ligand>
        <name>heme b</name>
        <dbReference type="ChEBI" id="CHEBI:60344"/>
    </ligand>
</feature>
<feature type="binding site" evidence="1 7 14 15">
    <location>
        <position position="482"/>
    </location>
    <ligand>
        <name>heme b</name>
        <dbReference type="ChEBI" id="CHEBI:60344"/>
    </ligand>
</feature>
<feature type="cross-link" description="1'-histidyl-3'-tyrosine (His-Tyr)" evidence="8">
    <location>
        <begin position="284"/>
        <end position="288"/>
    </location>
</feature>
<feature type="mutagenesis site" description="50% quinol oxidase activity." evidence="3">
    <original>H</original>
    <variation>A</variation>
    <location>
        <position position="54"/>
    </location>
</feature>
<feature type="mutagenesis site" description="No effect." evidence="11">
    <original>K</original>
    <variation>Q</variation>
    <location>
        <position position="55"/>
    </location>
</feature>
<feature type="mutagenesis site" description="No quinol oxidase activity." evidence="1 2">
    <original>R</original>
    <variation>H</variation>
    <location>
        <position position="71"/>
    </location>
</feature>
<feature type="mutagenesis site" description="Abolishes quinol oxidase activity." evidence="1 2">
    <original>R</original>
    <variation>Q</variation>
    <variation>L</variation>
    <location>
        <position position="71"/>
    </location>
</feature>
<feature type="mutagenesis site" description="Very similar to wild-type." evidence="1 2 4">
    <original>D</original>
    <variation>E</variation>
    <location>
        <position position="75"/>
    </location>
</feature>
<feature type="mutagenesis site" description="No quinol oxidase activity, altered binding of a semiquinone intermediate at the QH site." evidence="1 2 4">
    <original>D</original>
    <variation>H</variation>
    <location>
        <position position="75"/>
    </location>
</feature>
<feature type="mutagenesis site" description="Abolishes quinol oxidase activity." evidence="1 2 4">
    <original>D</original>
    <variation>N</variation>
    <location>
        <position position="75"/>
    </location>
</feature>
<feature type="mutagenesis site" description="Abolishes quinol oxidase activity." evidence="11">
    <original>R</original>
    <variation>Q</variation>
    <location>
        <position position="80"/>
    </location>
</feature>
<feature type="mutagenesis site" description="About 1% quinol oxidase activity." evidence="1 2">
    <original>H</original>
    <variation>F</variation>
    <location>
        <position position="98"/>
    </location>
</feature>
<feature type="mutagenesis site" description="Abolishes enzyme activity." evidence="1 2">
    <original>H</original>
    <variation>N</variation>
    <location>
        <position position="98"/>
    </location>
</feature>
<feature type="mutagenesis site" description="Reduces quinol oxidase activity by 75%, decreased affinity for ubiquinol-1." evidence="1">
    <original>Q</original>
    <variation>N</variation>
    <location>
        <position position="101"/>
    </location>
</feature>
<feature type="mutagenesis site" description="No quinol oxidase activity." evidence="2">
    <original>I</original>
    <variation>W</variation>
    <location>
        <position position="102"/>
    </location>
</feature>
<feature type="mutagenesis site" description="2% quinol oxidase activity, loss of heme b, loss of heme o, loss of Cu(B)." evidence="3">
    <original>H</original>
    <variation>A</variation>
    <location>
        <position position="106"/>
    </location>
</feature>
<feature type="mutagenesis site" description="Abolishes quinol oxidase activity." evidence="11">
    <original>D</original>
    <variation>N</variation>
    <location>
        <position position="135"/>
    </location>
</feature>
<feature type="mutagenesis site" description="No effect." evidence="11">
    <original>Y</original>
    <variation>F</variation>
    <location>
        <position position="173"/>
    </location>
</feature>
<feature type="mutagenesis site" description="No effect." evidence="11">
    <original>D</original>
    <variation>N</variation>
    <location>
        <position position="188"/>
    </location>
</feature>
<feature type="mutagenesis site" description="No effect.">
    <original>D</original>
    <variation>N</variation>
    <location>
        <position position="256"/>
    </location>
</feature>
<feature type="mutagenesis site" description="Abolishes quinol oxidase activity.">
    <original>R</original>
    <variation>Q</variation>
    <location>
        <position position="257"/>
    </location>
</feature>
<feature type="mutagenesis site" description="1% quinol oxidase activity, loss of heme o." evidence="3">
    <original>H</original>
    <variation>A</variation>
    <location>
        <position position="284"/>
    </location>
</feature>
<feature type="mutagenesis site" description="Great decrease in quinol oxidase activity." evidence="11">
    <original>E</original>
    <variation>Q</variation>
    <variation>D</variation>
    <location>
        <position position="286"/>
    </location>
</feature>
<feature type="mutagenesis site" description="Great decrease in activity, 100-fold decrease in heme b-to-heme o electron transfer." evidence="11">
    <original>Y</original>
    <variation>F</variation>
    <location>
        <position position="288"/>
    </location>
</feature>
<feature type="mutagenesis site" description="2% quinol oxidase activity, loss of Cu(B)." evidence="3">
    <original>H</original>
    <variation>A</variation>
    <location>
        <position position="333"/>
    </location>
</feature>
<feature type="mutagenesis site" description="1% quinol oxidase activity, loss of Cu(B)." evidence="3">
    <original>H</original>
    <variation>A</variation>
    <location>
        <position position="334"/>
    </location>
</feature>
<feature type="mutagenesis site" description="Abolishes quinol oxidase activity, 100-fold decrease in heme b-to-heme o electron transfer." evidence="11">
    <original>K</original>
    <variation>Q</variation>
    <location>
        <position position="362"/>
    </location>
</feature>
<feature type="mutagenesis site" description="Abolishes quinol oxidase activity." evidence="11">
    <original>D</original>
    <variation>N</variation>
    <location>
        <position position="407"/>
    </location>
</feature>
<feature type="mutagenesis site" description="50% quinol oxidase activity." evidence="3">
    <original>H</original>
    <variation>A</variation>
    <location>
        <position position="411"/>
    </location>
</feature>
<feature type="mutagenesis site" description="3% quinol oxidase activity, loss of heme o, loss of Cu(B)." evidence="3">
    <original>H</original>
    <variation>A</variation>
    <location>
        <position position="419"/>
    </location>
</feature>
<feature type="mutagenesis site" description="1% quinol oxidase activity, loss of heme b, some loss of Cu(B)." evidence="3">
    <original>H</original>
    <variation>A</variation>
    <location>
        <position position="421"/>
    </location>
</feature>
<feature type="mutagenesis site" description="No effect.">
    <original>R</original>
    <variation>Q</variation>
    <location>
        <position position="481"/>
    </location>
</feature>
<feature type="mutagenesis site" description="No effect.">
    <original>R</original>
    <variation>Q</variation>
    <location>
        <position position="482"/>
    </location>
</feature>
<feature type="mutagenesis site" description="Abolishes quinol oxidase activity." evidence="11">
    <original>E</original>
    <variation>Q</variation>
    <location>
        <position position="540"/>
    </location>
</feature>
<feature type="helix" evidence="23">
    <location>
        <begin position="7"/>
        <end position="9"/>
    </location>
</feature>
<feature type="helix" evidence="23">
    <location>
        <begin position="15"/>
        <end position="37"/>
    </location>
</feature>
<feature type="helix" evidence="23">
    <location>
        <begin position="41"/>
        <end position="47"/>
    </location>
</feature>
<feature type="turn" evidence="23">
    <location>
        <begin position="48"/>
        <end position="50"/>
    </location>
</feature>
<feature type="helix" evidence="23">
    <location>
        <begin position="54"/>
        <end position="87"/>
    </location>
</feature>
<feature type="helix" evidence="23">
    <location>
        <begin position="96"/>
        <end position="112"/>
    </location>
</feature>
<feature type="helix" evidence="23">
    <location>
        <begin position="115"/>
        <end position="130"/>
    </location>
</feature>
<feature type="helix" evidence="23">
    <location>
        <begin position="139"/>
        <end position="161"/>
    </location>
</feature>
<feature type="turn" evidence="23">
    <location>
        <begin position="169"/>
        <end position="172"/>
    </location>
</feature>
<feature type="turn" evidence="23">
    <location>
        <begin position="174"/>
        <end position="177"/>
    </location>
</feature>
<feature type="turn" evidence="23">
    <location>
        <begin position="179"/>
        <end position="181"/>
    </location>
</feature>
<feature type="helix" evidence="23">
    <location>
        <begin position="186"/>
        <end position="214"/>
    </location>
</feature>
<feature type="helix" evidence="23">
    <location>
        <begin position="222"/>
        <end position="224"/>
    </location>
</feature>
<feature type="helix" evidence="23">
    <location>
        <begin position="227"/>
        <end position="259"/>
    </location>
</feature>
<feature type="strand" evidence="21">
    <location>
        <begin position="266"/>
        <end position="269"/>
    </location>
</feature>
<feature type="helix" evidence="23">
    <location>
        <begin position="272"/>
        <end position="306"/>
    </location>
</feature>
<feature type="helix" evidence="23">
    <location>
        <begin position="313"/>
        <end position="326"/>
    </location>
</feature>
<feature type="helix" evidence="23">
    <location>
        <begin position="331"/>
        <end position="334"/>
    </location>
</feature>
<feature type="helix" evidence="23">
    <location>
        <begin position="336"/>
        <end position="338"/>
    </location>
</feature>
<feature type="helix" evidence="23">
    <location>
        <begin position="342"/>
        <end position="354"/>
    </location>
</feature>
<feature type="helix" evidence="23">
    <location>
        <begin position="356"/>
        <end position="370"/>
    </location>
</feature>
<feature type="strand" evidence="22">
    <location>
        <begin position="371"/>
        <end position="373"/>
    </location>
</feature>
<feature type="helix" evidence="23">
    <location>
        <begin position="379"/>
        <end position="402"/>
    </location>
</feature>
<feature type="helix" evidence="23">
    <location>
        <begin position="404"/>
        <end position="410"/>
    </location>
</feature>
<feature type="strand" evidence="24">
    <location>
        <begin position="411"/>
        <end position="413"/>
    </location>
</feature>
<feature type="helix" evidence="23">
    <location>
        <begin position="414"/>
        <end position="444"/>
    </location>
</feature>
<feature type="helix" evidence="23">
    <location>
        <begin position="450"/>
        <end position="476"/>
    </location>
</feature>
<feature type="strand" evidence="21">
    <location>
        <begin position="480"/>
        <end position="482"/>
    </location>
</feature>
<feature type="helix" evidence="23">
    <location>
        <begin position="489"/>
        <end position="491"/>
    </location>
</feature>
<feature type="helix" evidence="23">
    <location>
        <begin position="492"/>
        <end position="521"/>
    </location>
</feature>
<feature type="helix" evidence="23">
    <location>
        <begin position="523"/>
        <end position="525"/>
    </location>
</feature>
<feature type="strand" evidence="23">
    <location>
        <begin position="529"/>
        <end position="531"/>
    </location>
</feature>
<feature type="helix" evidence="23">
    <location>
        <begin position="539"/>
        <end position="542"/>
    </location>
</feature>
<feature type="strand" evidence="20">
    <location>
        <begin position="549"/>
        <end position="551"/>
    </location>
</feature>
<feature type="strand" evidence="23">
    <location>
        <begin position="560"/>
        <end position="562"/>
    </location>
</feature>
<feature type="helix" evidence="23">
    <location>
        <begin position="563"/>
        <end position="569"/>
    </location>
</feature>
<feature type="strand" evidence="23">
    <location>
        <begin position="583"/>
        <end position="586"/>
    </location>
</feature>
<feature type="helix" evidence="23">
    <location>
        <begin position="591"/>
        <end position="607"/>
    </location>
</feature>
<feature type="helix" evidence="23">
    <location>
        <begin position="611"/>
        <end position="629"/>
    </location>
</feature>
<feature type="strand" evidence="23">
    <location>
        <begin position="635"/>
        <end position="638"/>
    </location>
</feature>
<feature type="helix" evidence="23">
    <location>
        <begin position="640"/>
        <end position="657"/>
    </location>
</feature>
<proteinExistence type="evidence at protein level"/>